<keyword id="KW-1185">Reference proteome</keyword>
<keyword id="KW-0833">Ubl conjugation pathway</keyword>
<reference key="1">
    <citation type="journal article" date="2003" name="PLoS Biol.">
        <title>The genome sequence of Caenorhabditis briggsae: a platform for comparative genomics.</title>
        <authorList>
            <person name="Stein L.D."/>
            <person name="Bao Z."/>
            <person name="Blasiar D."/>
            <person name="Blumenthal T."/>
            <person name="Brent M.R."/>
            <person name="Chen N."/>
            <person name="Chinwalla A."/>
            <person name="Clarke L."/>
            <person name="Clee C."/>
            <person name="Coghlan A."/>
            <person name="Coulson A."/>
            <person name="D'Eustachio P."/>
            <person name="Fitch D.H.A."/>
            <person name="Fulton L.A."/>
            <person name="Fulton R.E."/>
            <person name="Griffiths-Jones S."/>
            <person name="Harris T.W."/>
            <person name="Hillier L.W."/>
            <person name="Kamath R."/>
            <person name="Kuwabara P.E."/>
            <person name="Mardis E.R."/>
            <person name="Marra M.A."/>
            <person name="Miner T.L."/>
            <person name="Minx P."/>
            <person name="Mullikin J.C."/>
            <person name="Plumb R.W."/>
            <person name="Rogers J."/>
            <person name="Schein J.E."/>
            <person name="Sohrmann M."/>
            <person name="Spieth J."/>
            <person name="Stajich J.E."/>
            <person name="Wei C."/>
            <person name="Willey D."/>
            <person name="Wilson R.K."/>
            <person name="Durbin R.M."/>
            <person name="Waterston R.H."/>
        </authorList>
    </citation>
    <scope>NUCLEOTIDE SEQUENCE [LARGE SCALE GENOMIC DNA]</scope>
    <source>
        <strain>AF16</strain>
    </source>
</reference>
<gene>
    <name evidence="4" type="primary">ufc-1</name>
    <name evidence="4" type="ORF">CBG10119</name>
</gene>
<accession>A8XAF4</accession>
<evidence type="ECO:0000250" key="1">
    <source>
        <dbReference type="UniProtKB" id="Q03598"/>
    </source>
</evidence>
<evidence type="ECO:0000250" key="2">
    <source>
        <dbReference type="UniProtKB" id="Q9Y3C8"/>
    </source>
</evidence>
<evidence type="ECO:0000305" key="3"/>
<evidence type="ECO:0000312" key="4">
    <source>
        <dbReference type="WormBase" id="CBG10119"/>
    </source>
</evidence>
<name>UFC1_CAEBR</name>
<feature type="chain" id="PRO_0000391963" description="Ubiquitin-fold modifier-conjugating enzyme 1">
    <location>
        <begin position="1"/>
        <end position="162"/>
    </location>
</feature>
<feature type="active site" description="Glycyl thioester intermediate" evidence="2">
    <location>
        <position position="115"/>
    </location>
</feature>
<organism>
    <name type="scientific">Caenorhabditis briggsae</name>
    <dbReference type="NCBI Taxonomy" id="6238"/>
    <lineage>
        <taxon>Eukaryota</taxon>
        <taxon>Metazoa</taxon>
        <taxon>Ecdysozoa</taxon>
        <taxon>Nematoda</taxon>
        <taxon>Chromadorea</taxon>
        <taxon>Rhabditida</taxon>
        <taxon>Rhabditina</taxon>
        <taxon>Rhabditomorpha</taxon>
        <taxon>Rhabditoidea</taxon>
        <taxon>Rhabditidae</taxon>
        <taxon>Peloderinae</taxon>
        <taxon>Caenorhabditis</taxon>
    </lineage>
</organism>
<protein>
    <recommendedName>
        <fullName>Ubiquitin-fold modifier-conjugating enzyme 1</fullName>
    </recommendedName>
    <alternativeName>
        <fullName>Ufm1-conjugating enzyme 1</fullName>
    </alternativeName>
</protein>
<sequence>MDETTKSSLKAIPLCKTKAGPRDGDLWMERLKAKYEAIIAAVQNNKTSDRDWFKLEANERGTKWFGKCWYFHNMVKYEFDVEFDIPITYPVTAPEIALPELDGKTAKMYRGGKICLSEHFKPLWARNTPKFGIAHAFALGLGPWMAVEIPDLIEKGIIQPKA</sequence>
<proteinExistence type="inferred from homology"/>
<dbReference type="EMBL" id="HE601459">
    <property type="protein sequence ID" value="CAP29622.1"/>
    <property type="molecule type" value="Genomic_DNA"/>
</dbReference>
<dbReference type="RefSeq" id="XP_002641773.1">
    <property type="nucleotide sequence ID" value="XM_002641727.1"/>
</dbReference>
<dbReference type="SMR" id="A8XAF4"/>
<dbReference type="FunCoup" id="A8XAF4">
    <property type="interactions" value="2130"/>
</dbReference>
<dbReference type="STRING" id="6238.A8XAF4"/>
<dbReference type="GeneID" id="8583767"/>
<dbReference type="KEGG" id="cbr:CBG_10119"/>
<dbReference type="CTD" id="8583767"/>
<dbReference type="WormBase" id="CBG10119">
    <property type="protein sequence ID" value="CBP46807"/>
    <property type="gene ID" value="WBGene00031590"/>
    <property type="gene designation" value="Cbr-ufc-1"/>
</dbReference>
<dbReference type="eggNOG" id="KOG3357">
    <property type="taxonomic scope" value="Eukaryota"/>
</dbReference>
<dbReference type="HOGENOM" id="CLU_101170_0_0_1"/>
<dbReference type="InParanoid" id="A8XAF4"/>
<dbReference type="OMA" id="LWQKNVP"/>
<dbReference type="Proteomes" id="UP000008549">
    <property type="component" value="Unassembled WGS sequence"/>
</dbReference>
<dbReference type="GO" id="GO:0061657">
    <property type="term" value="F:UFM1 conjugating enzyme activity"/>
    <property type="evidence" value="ECO:0007669"/>
    <property type="project" value="InterPro"/>
</dbReference>
<dbReference type="GO" id="GO:0071568">
    <property type="term" value="F:UFM1 transferase activity"/>
    <property type="evidence" value="ECO:0000318"/>
    <property type="project" value="GO_Central"/>
</dbReference>
<dbReference type="GO" id="GO:0071569">
    <property type="term" value="P:protein ufmylation"/>
    <property type="evidence" value="ECO:0007669"/>
    <property type="project" value="InterPro"/>
</dbReference>
<dbReference type="GO" id="GO:0034976">
    <property type="term" value="P:response to endoplasmic reticulum stress"/>
    <property type="evidence" value="ECO:0000318"/>
    <property type="project" value="GO_Central"/>
</dbReference>
<dbReference type="GO" id="GO:0061709">
    <property type="term" value="P:reticulophagy"/>
    <property type="evidence" value="ECO:0000318"/>
    <property type="project" value="GO_Central"/>
</dbReference>
<dbReference type="CDD" id="cd11686">
    <property type="entry name" value="UBCc_UFC1"/>
    <property type="match status" value="1"/>
</dbReference>
<dbReference type="FunFam" id="3.10.110.10:FF:000042">
    <property type="entry name" value="Ubiquitin-fold modifier-conjugating enzyme 1"/>
    <property type="match status" value="1"/>
</dbReference>
<dbReference type="Gene3D" id="3.10.110.10">
    <property type="entry name" value="Ubiquitin Conjugating Enzyme"/>
    <property type="match status" value="1"/>
</dbReference>
<dbReference type="InterPro" id="IPR016135">
    <property type="entry name" value="UBQ-conjugating_enzyme/RWD"/>
</dbReference>
<dbReference type="InterPro" id="IPR014806">
    <property type="entry name" value="Ufc1"/>
</dbReference>
<dbReference type="PANTHER" id="PTHR12921">
    <property type="entry name" value="UBIQUITIN-FOLD MODIFIER-CONJUGATING ENZYME 1"/>
    <property type="match status" value="1"/>
</dbReference>
<dbReference type="PANTHER" id="PTHR12921:SF0">
    <property type="entry name" value="UBIQUITIN-FOLD MODIFIER-CONJUGATING ENZYME 1"/>
    <property type="match status" value="1"/>
</dbReference>
<dbReference type="Pfam" id="PF08694">
    <property type="entry name" value="UFC1"/>
    <property type="match status" value="1"/>
</dbReference>
<dbReference type="PIRSF" id="PIRSF008716">
    <property type="entry name" value="DUF1782"/>
    <property type="match status" value="1"/>
</dbReference>
<dbReference type="SUPFAM" id="SSF54495">
    <property type="entry name" value="UBC-like"/>
    <property type="match status" value="1"/>
</dbReference>
<comment type="function">
    <text evidence="1 2">E2-like enzyme which forms an intermediate with ufm-1. The intermediate is formed via a thioester linkage.</text>
</comment>
<comment type="subunit">
    <text evidence="1">Interacts with uba-5.</text>
</comment>
<comment type="similarity">
    <text evidence="3">Belongs to the ubiquitin-conjugating enzyme family. UFC1 subfamily.</text>
</comment>